<dbReference type="EMBL" id="X17524">
    <property type="protein sequence ID" value="CAA35559.1"/>
    <property type="molecule type" value="Genomic_DNA"/>
</dbReference>
<dbReference type="PIR" id="S29883">
    <property type="entry name" value="S29883"/>
</dbReference>
<dbReference type="SMR" id="P33103"/>
<dbReference type="STRING" id="1232675.GCA_000309825_02147"/>
<dbReference type="GO" id="GO:1990904">
    <property type="term" value="C:ribonucleoprotein complex"/>
    <property type="evidence" value="ECO:0007669"/>
    <property type="project" value="UniProtKB-KW"/>
</dbReference>
<dbReference type="GO" id="GO:0005840">
    <property type="term" value="C:ribosome"/>
    <property type="evidence" value="ECO:0007669"/>
    <property type="project" value="UniProtKB-KW"/>
</dbReference>
<dbReference type="GO" id="GO:0019843">
    <property type="term" value="F:rRNA binding"/>
    <property type="evidence" value="ECO:0007669"/>
    <property type="project" value="UniProtKB-UniRule"/>
</dbReference>
<dbReference type="GO" id="GO:0003735">
    <property type="term" value="F:structural constituent of ribosome"/>
    <property type="evidence" value="ECO:0007669"/>
    <property type="project" value="InterPro"/>
</dbReference>
<dbReference type="GO" id="GO:0006412">
    <property type="term" value="P:translation"/>
    <property type="evidence" value="ECO:0007669"/>
    <property type="project" value="UniProtKB-UniRule"/>
</dbReference>
<dbReference type="CDD" id="cd06089">
    <property type="entry name" value="KOW_RPL26"/>
    <property type="match status" value="1"/>
</dbReference>
<dbReference type="Gene3D" id="2.30.30.30">
    <property type="match status" value="1"/>
</dbReference>
<dbReference type="HAMAP" id="MF_01326_B">
    <property type="entry name" value="Ribosomal_uL24_B"/>
    <property type="match status" value="1"/>
</dbReference>
<dbReference type="InterPro" id="IPR005824">
    <property type="entry name" value="KOW"/>
</dbReference>
<dbReference type="InterPro" id="IPR014722">
    <property type="entry name" value="Rib_uL2_dom2"/>
</dbReference>
<dbReference type="InterPro" id="IPR003256">
    <property type="entry name" value="Ribosomal_uL24"/>
</dbReference>
<dbReference type="InterPro" id="IPR005825">
    <property type="entry name" value="Ribosomal_uL24_CS"/>
</dbReference>
<dbReference type="InterPro" id="IPR041988">
    <property type="entry name" value="Ribosomal_uL24_KOW"/>
</dbReference>
<dbReference type="InterPro" id="IPR008991">
    <property type="entry name" value="Translation_prot_SH3-like_sf"/>
</dbReference>
<dbReference type="NCBIfam" id="TIGR01079">
    <property type="entry name" value="rplX_bact"/>
    <property type="match status" value="1"/>
</dbReference>
<dbReference type="PANTHER" id="PTHR12903">
    <property type="entry name" value="MITOCHONDRIAL RIBOSOMAL PROTEIN L24"/>
    <property type="match status" value="1"/>
</dbReference>
<dbReference type="Pfam" id="PF00467">
    <property type="entry name" value="KOW"/>
    <property type="match status" value="1"/>
</dbReference>
<dbReference type="Pfam" id="PF17136">
    <property type="entry name" value="ribosomal_L24"/>
    <property type="match status" value="1"/>
</dbReference>
<dbReference type="SMART" id="SM00739">
    <property type="entry name" value="KOW"/>
    <property type="match status" value="1"/>
</dbReference>
<dbReference type="SUPFAM" id="SSF50104">
    <property type="entry name" value="Translation proteins SH3-like domain"/>
    <property type="match status" value="1"/>
</dbReference>
<dbReference type="PROSITE" id="PS01108">
    <property type="entry name" value="RIBOSOMAL_L24"/>
    <property type="match status" value="1"/>
</dbReference>
<organism>
    <name type="scientific">Micrococcus luteus</name>
    <name type="common">Micrococcus lysodeikticus</name>
    <dbReference type="NCBI Taxonomy" id="1270"/>
    <lineage>
        <taxon>Bacteria</taxon>
        <taxon>Bacillati</taxon>
        <taxon>Actinomycetota</taxon>
        <taxon>Actinomycetes</taxon>
        <taxon>Micrococcales</taxon>
        <taxon>Micrococcaceae</taxon>
        <taxon>Micrococcus</taxon>
    </lineage>
</organism>
<gene>
    <name evidence="1" type="primary">rplX</name>
</gene>
<protein>
    <recommendedName>
        <fullName evidence="1">Large ribosomal subunit protein uL24</fullName>
    </recommendedName>
    <alternativeName>
        <fullName evidence="2">50S ribosomal protein L24</fullName>
    </alternativeName>
</protein>
<keyword id="KW-0687">Ribonucleoprotein</keyword>
<keyword id="KW-0689">Ribosomal protein</keyword>
<keyword id="KW-0694">RNA-binding</keyword>
<keyword id="KW-0699">rRNA-binding</keyword>
<name>RL24_MICLU</name>
<evidence type="ECO:0000255" key="1">
    <source>
        <dbReference type="HAMAP-Rule" id="MF_01326"/>
    </source>
</evidence>
<evidence type="ECO:0000305" key="2"/>
<sequence>MAKIKKDDLVQVISGKDKGKQGKVLRVFPTDERVLVEGVNRVTKHLRAGQDNNGSTEGGLQVVEAPIHISNVAVVDPETKKPTRVGYRFETVEKDGVTKTVKVRFAKASGKEL</sequence>
<reference key="1">
    <citation type="journal article" date="1989" name="J. Mol. Evol.">
        <title>Spectinomycin operon of Micrococcus luteus: evolutionary implications of organization and novel codon usage.</title>
        <authorList>
            <person name="Ohama T."/>
            <person name="Muto A."/>
            <person name="Osawa S."/>
        </authorList>
    </citation>
    <scope>NUCLEOTIDE SEQUENCE [GENOMIC DNA]</scope>
</reference>
<feature type="chain" id="PRO_0000130674" description="Large ribosomal subunit protein uL24">
    <location>
        <begin position="1"/>
        <end position="113"/>
    </location>
</feature>
<proteinExistence type="inferred from homology"/>
<accession>P33103</accession>
<comment type="function">
    <text evidence="1">One of two assembly initiator proteins, it binds directly to the 5'-end of the 23S rRNA, where it nucleates assembly of the 50S subunit.</text>
</comment>
<comment type="function">
    <text evidence="1">One of the proteins that surrounds the polypeptide exit tunnel on the outside of the subunit.</text>
</comment>
<comment type="subunit">
    <text evidence="1">Part of the 50S ribosomal subunit.</text>
</comment>
<comment type="similarity">
    <text evidence="1">Belongs to the universal ribosomal protein uL24 family.</text>
</comment>